<comment type="function">
    <text evidence="1">Participates actively in the response to hyperosmotic and heat shock by preventing the aggregation of stress-denatured proteins, in association with DnaK and GrpE. It is the nucleotide exchange factor for DnaK and may function as a thermosensor. Unfolded proteins bind initially to DnaJ; upon interaction with the DnaJ-bound protein, DnaK hydrolyzes its bound ATP, resulting in the formation of a stable complex. GrpE releases ADP from DnaK; ATP binding to DnaK triggers the release of the substrate protein, thus completing the reaction cycle. Several rounds of ATP-dependent interactions between DnaJ, DnaK and GrpE are required for fully efficient folding.</text>
</comment>
<comment type="subunit">
    <text evidence="1">Homodimer.</text>
</comment>
<comment type="subcellular location">
    <subcellularLocation>
        <location evidence="1">Cytoplasm</location>
    </subcellularLocation>
</comment>
<comment type="similarity">
    <text evidence="1">Belongs to the GrpE family.</text>
</comment>
<gene>
    <name evidence="1" type="primary">grpE</name>
    <name type="ordered locus">NMA0744</name>
</gene>
<proteinExistence type="inferred from homology"/>
<dbReference type="EMBL" id="AL157959">
    <property type="protein sequence ID" value="CAM07995.1"/>
    <property type="molecule type" value="Genomic_DNA"/>
</dbReference>
<dbReference type="PIR" id="D81184">
    <property type="entry name" value="D81184"/>
</dbReference>
<dbReference type="RefSeq" id="WP_002214370.1">
    <property type="nucleotide sequence ID" value="NC_003116.1"/>
</dbReference>
<dbReference type="SMR" id="Q9JR00"/>
<dbReference type="EnsemblBacteria" id="CAM07995">
    <property type="protein sequence ID" value="CAM07995"/>
    <property type="gene ID" value="NMA0744"/>
</dbReference>
<dbReference type="GeneID" id="93386624"/>
<dbReference type="KEGG" id="nma:NMA0744"/>
<dbReference type="HOGENOM" id="CLU_057217_6_2_4"/>
<dbReference type="Proteomes" id="UP000000626">
    <property type="component" value="Chromosome"/>
</dbReference>
<dbReference type="GO" id="GO:0005829">
    <property type="term" value="C:cytosol"/>
    <property type="evidence" value="ECO:0007669"/>
    <property type="project" value="TreeGrafter"/>
</dbReference>
<dbReference type="GO" id="GO:0000774">
    <property type="term" value="F:adenyl-nucleotide exchange factor activity"/>
    <property type="evidence" value="ECO:0007669"/>
    <property type="project" value="InterPro"/>
</dbReference>
<dbReference type="GO" id="GO:0042803">
    <property type="term" value="F:protein homodimerization activity"/>
    <property type="evidence" value="ECO:0007669"/>
    <property type="project" value="InterPro"/>
</dbReference>
<dbReference type="GO" id="GO:0051087">
    <property type="term" value="F:protein-folding chaperone binding"/>
    <property type="evidence" value="ECO:0007669"/>
    <property type="project" value="InterPro"/>
</dbReference>
<dbReference type="GO" id="GO:0051082">
    <property type="term" value="F:unfolded protein binding"/>
    <property type="evidence" value="ECO:0007669"/>
    <property type="project" value="TreeGrafter"/>
</dbReference>
<dbReference type="GO" id="GO:0006457">
    <property type="term" value="P:protein folding"/>
    <property type="evidence" value="ECO:0007669"/>
    <property type="project" value="InterPro"/>
</dbReference>
<dbReference type="CDD" id="cd00446">
    <property type="entry name" value="GrpE"/>
    <property type="match status" value="1"/>
</dbReference>
<dbReference type="FunFam" id="2.30.22.10:FF:000001">
    <property type="entry name" value="Protein GrpE"/>
    <property type="match status" value="1"/>
</dbReference>
<dbReference type="Gene3D" id="3.90.20.20">
    <property type="match status" value="1"/>
</dbReference>
<dbReference type="Gene3D" id="2.30.22.10">
    <property type="entry name" value="Head domain of nucleotide exchange factor GrpE"/>
    <property type="match status" value="1"/>
</dbReference>
<dbReference type="HAMAP" id="MF_01151">
    <property type="entry name" value="GrpE"/>
    <property type="match status" value="1"/>
</dbReference>
<dbReference type="InterPro" id="IPR000740">
    <property type="entry name" value="GrpE"/>
</dbReference>
<dbReference type="InterPro" id="IPR013805">
    <property type="entry name" value="GrpE_coiled_coil"/>
</dbReference>
<dbReference type="InterPro" id="IPR009012">
    <property type="entry name" value="GrpE_head"/>
</dbReference>
<dbReference type="NCBIfam" id="NF010737">
    <property type="entry name" value="PRK14139.1"/>
    <property type="match status" value="1"/>
</dbReference>
<dbReference type="NCBIfam" id="NF010738">
    <property type="entry name" value="PRK14140.1"/>
    <property type="match status" value="1"/>
</dbReference>
<dbReference type="PANTHER" id="PTHR21237">
    <property type="entry name" value="GRPE PROTEIN"/>
    <property type="match status" value="1"/>
</dbReference>
<dbReference type="PANTHER" id="PTHR21237:SF23">
    <property type="entry name" value="GRPE PROTEIN HOMOLOG, MITOCHONDRIAL"/>
    <property type="match status" value="1"/>
</dbReference>
<dbReference type="Pfam" id="PF01025">
    <property type="entry name" value="GrpE"/>
    <property type="match status" value="1"/>
</dbReference>
<dbReference type="PRINTS" id="PR00773">
    <property type="entry name" value="GRPEPROTEIN"/>
</dbReference>
<dbReference type="SUPFAM" id="SSF58014">
    <property type="entry name" value="Coiled-coil domain of nucleotide exchange factor GrpE"/>
    <property type="match status" value="1"/>
</dbReference>
<dbReference type="SUPFAM" id="SSF51064">
    <property type="entry name" value="Head domain of nucleotide exchange factor GrpE"/>
    <property type="match status" value="1"/>
</dbReference>
<dbReference type="PROSITE" id="PS01071">
    <property type="entry name" value="GRPE"/>
    <property type="match status" value="1"/>
</dbReference>
<protein>
    <recommendedName>
        <fullName evidence="1">Protein GrpE</fullName>
    </recommendedName>
    <alternativeName>
        <fullName evidence="1">HSP-70 cofactor</fullName>
    </alternativeName>
</protein>
<keyword id="KW-0143">Chaperone</keyword>
<keyword id="KW-0963">Cytoplasm</keyword>
<keyword id="KW-0346">Stress response</keyword>
<reference key="1">
    <citation type="journal article" date="2000" name="Nature">
        <title>Complete DNA sequence of a serogroup A strain of Neisseria meningitidis Z2491.</title>
        <authorList>
            <person name="Parkhill J."/>
            <person name="Achtman M."/>
            <person name="James K.D."/>
            <person name="Bentley S.D."/>
            <person name="Churcher C.M."/>
            <person name="Klee S.R."/>
            <person name="Morelli G."/>
            <person name="Basham D."/>
            <person name="Brown D."/>
            <person name="Chillingworth T."/>
            <person name="Davies R.M."/>
            <person name="Davis P."/>
            <person name="Devlin K."/>
            <person name="Feltwell T."/>
            <person name="Hamlin N."/>
            <person name="Holroyd S."/>
            <person name="Jagels K."/>
            <person name="Leather S."/>
            <person name="Moule S."/>
            <person name="Mungall K.L."/>
            <person name="Quail M.A."/>
            <person name="Rajandream M.A."/>
            <person name="Rutherford K.M."/>
            <person name="Simmonds M."/>
            <person name="Skelton J."/>
            <person name="Whitehead S."/>
            <person name="Spratt B.G."/>
            <person name="Barrell B.G."/>
        </authorList>
    </citation>
    <scope>NUCLEOTIDE SEQUENCE [LARGE SCALE GENOMIC DNA]</scope>
    <source>
        <strain>DSM 15465 / Z2491</strain>
    </source>
</reference>
<name>GRPE_NEIMA</name>
<sequence length="192" mass="21322">MSEQTQQQNSEEAVENVEAVETVETVGNADGVQEQAAAEPAYEDLQARIAELEAQLKDEQLRALANEQNLRRRHQQEIADTHKFAGQKFAVEMLPVKDYLEMALLDQSGNFDALKMGVQMTLNELQKAFDATQIKEINPKAGDKLDPNIHQAMQAVASEQEPNTVVGVMKKGYTLSDRVLRPAMVTVAQKEA</sequence>
<accession>Q9JR00</accession>
<accession>A1IQG4</accession>
<feature type="chain" id="PRO_0000113825" description="Protein GrpE">
    <location>
        <begin position="1"/>
        <end position="192"/>
    </location>
</feature>
<organism>
    <name type="scientific">Neisseria meningitidis serogroup A / serotype 4A (strain DSM 15465 / Z2491)</name>
    <dbReference type="NCBI Taxonomy" id="122587"/>
    <lineage>
        <taxon>Bacteria</taxon>
        <taxon>Pseudomonadati</taxon>
        <taxon>Pseudomonadota</taxon>
        <taxon>Betaproteobacteria</taxon>
        <taxon>Neisseriales</taxon>
        <taxon>Neisseriaceae</taxon>
        <taxon>Neisseria</taxon>
    </lineage>
</organism>
<evidence type="ECO:0000255" key="1">
    <source>
        <dbReference type="HAMAP-Rule" id="MF_01151"/>
    </source>
</evidence>